<comment type="catalytic activity">
    <reaction evidence="1">
        <text>N-(5-phospho-beta-D-ribosyl)anthranilate = 1-(2-carboxyphenylamino)-1-deoxy-D-ribulose 5-phosphate</text>
        <dbReference type="Rhea" id="RHEA:21540"/>
        <dbReference type="ChEBI" id="CHEBI:18277"/>
        <dbReference type="ChEBI" id="CHEBI:58613"/>
        <dbReference type="EC" id="5.3.1.24"/>
    </reaction>
</comment>
<comment type="pathway">
    <text evidence="1">Amino-acid biosynthesis; L-tryptophan biosynthesis; L-tryptophan from chorismate: step 3/5.</text>
</comment>
<comment type="similarity">
    <text evidence="1">Belongs to the TrpF family.</text>
</comment>
<keyword id="KW-0028">Amino-acid biosynthesis</keyword>
<keyword id="KW-0057">Aromatic amino acid biosynthesis</keyword>
<keyword id="KW-0413">Isomerase</keyword>
<keyword id="KW-0822">Tryptophan biosynthesis</keyword>
<protein>
    <recommendedName>
        <fullName evidence="1">N-(5'-phosphoribosyl)anthranilate isomerase</fullName>
        <shortName evidence="1">PRAI</shortName>
        <ecNumber evidence="1">5.3.1.24</ecNumber>
    </recommendedName>
</protein>
<organism>
    <name type="scientific">Mesorhizobium japonicum (strain LMG 29417 / CECT 9101 / MAFF 303099)</name>
    <name type="common">Mesorhizobium loti (strain MAFF 303099)</name>
    <dbReference type="NCBI Taxonomy" id="266835"/>
    <lineage>
        <taxon>Bacteria</taxon>
        <taxon>Pseudomonadati</taxon>
        <taxon>Pseudomonadota</taxon>
        <taxon>Alphaproteobacteria</taxon>
        <taxon>Hyphomicrobiales</taxon>
        <taxon>Phyllobacteriaceae</taxon>
        <taxon>Mesorhizobium</taxon>
    </lineage>
</organism>
<accession>Q98CN8</accession>
<dbReference type="EC" id="5.3.1.24" evidence="1"/>
<dbReference type="EMBL" id="BA000012">
    <property type="protein sequence ID" value="BAB51583.1"/>
    <property type="molecule type" value="Genomic_DNA"/>
</dbReference>
<dbReference type="RefSeq" id="WP_010912922.1">
    <property type="nucleotide sequence ID" value="NC_002678.2"/>
</dbReference>
<dbReference type="SMR" id="Q98CN8"/>
<dbReference type="KEGG" id="mlo:mlr5070"/>
<dbReference type="PATRIC" id="fig|266835.9.peg.4004"/>
<dbReference type="eggNOG" id="COG0135">
    <property type="taxonomic scope" value="Bacteria"/>
</dbReference>
<dbReference type="HOGENOM" id="CLU_076364_1_1_5"/>
<dbReference type="UniPathway" id="UPA00035">
    <property type="reaction ID" value="UER00042"/>
</dbReference>
<dbReference type="Proteomes" id="UP000000552">
    <property type="component" value="Chromosome"/>
</dbReference>
<dbReference type="GO" id="GO:0004640">
    <property type="term" value="F:phosphoribosylanthranilate isomerase activity"/>
    <property type="evidence" value="ECO:0007669"/>
    <property type="project" value="UniProtKB-UniRule"/>
</dbReference>
<dbReference type="GO" id="GO:0000162">
    <property type="term" value="P:L-tryptophan biosynthetic process"/>
    <property type="evidence" value="ECO:0007669"/>
    <property type="project" value="UniProtKB-UniRule"/>
</dbReference>
<dbReference type="CDD" id="cd00405">
    <property type="entry name" value="PRAI"/>
    <property type="match status" value="1"/>
</dbReference>
<dbReference type="Gene3D" id="3.20.20.70">
    <property type="entry name" value="Aldolase class I"/>
    <property type="match status" value="1"/>
</dbReference>
<dbReference type="HAMAP" id="MF_00135">
    <property type="entry name" value="PRAI"/>
    <property type="match status" value="1"/>
</dbReference>
<dbReference type="InterPro" id="IPR013785">
    <property type="entry name" value="Aldolase_TIM"/>
</dbReference>
<dbReference type="InterPro" id="IPR001240">
    <property type="entry name" value="PRAI_dom"/>
</dbReference>
<dbReference type="InterPro" id="IPR011060">
    <property type="entry name" value="RibuloseP-bd_barrel"/>
</dbReference>
<dbReference type="InterPro" id="IPR044643">
    <property type="entry name" value="TrpF_fam"/>
</dbReference>
<dbReference type="NCBIfam" id="NF002295">
    <property type="entry name" value="PRK01222.1-1"/>
    <property type="match status" value="1"/>
</dbReference>
<dbReference type="PANTHER" id="PTHR42894">
    <property type="entry name" value="N-(5'-PHOSPHORIBOSYL)ANTHRANILATE ISOMERASE"/>
    <property type="match status" value="1"/>
</dbReference>
<dbReference type="PANTHER" id="PTHR42894:SF1">
    <property type="entry name" value="N-(5'-PHOSPHORIBOSYL)ANTHRANILATE ISOMERASE"/>
    <property type="match status" value="1"/>
</dbReference>
<dbReference type="Pfam" id="PF00697">
    <property type="entry name" value="PRAI"/>
    <property type="match status" value="1"/>
</dbReference>
<dbReference type="SUPFAM" id="SSF51366">
    <property type="entry name" value="Ribulose-phoshate binding barrel"/>
    <property type="match status" value="1"/>
</dbReference>
<reference key="1">
    <citation type="journal article" date="2000" name="DNA Res.">
        <title>Complete genome structure of the nitrogen-fixing symbiotic bacterium Mesorhizobium loti.</title>
        <authorList>
            <person name="Kaneko T."/>
            <person name="Nakamura Y."/>
            <person name="Sato S."/>
            <person name="Asamizu E."/>
            <person name="Kato T."/>
            <person name="Sasamoto S."/>
            <person name="Watanabe A."/>
            <person name="Idesawa K."/>
            <person name="Ishikawa A."/>
            <person name="Kawashima K."/>
            <person name="Kimura T."/>
            <person name="Kishida Y."/>
            <person name="Kiyokawa C."/>
            <person name="Kohara M."/>
            <person name="Matsumoto M."/>
            <person name="Matsuno A."/>
            <person name="Mochizuki Y."/>
            <person name="Nakayama S."/>
            <person name="Nakazaki N."/>
            <person name="Shimpo S."/>
            <person name="Sugimoto M."/>
            <person name="Takeuchi C."/>
            <person name="Yamada M."/>
            <person name="Tabata S."/>
        </authorList>
    </citation>
    <scope>NUCLEOTIDE SEQUENCE [LARGE SCALE GENOMIC DNA]</scope>
    <source>
        <strain>LMG 29417 / CECT 9101 / MAFF 303099</strain>
    </source>
</reference>
<feature type="chain" id="PRO_0000154373" description="N-(5'-phosphoribosyl)anthranilate isomerase">
    <location>
        <begin position="1"/>
        <end position="219"/>
    </location>
</feature>
<evidence type="ECO:0000255" key="1">
    <source>
        <dbReference type="HAMAP-Rule" id="MF_00135"/>
    </source>
</evidence>
<proteinExistence type="inferred from homology"/>
<gene>
    <name evidence="1" type="primary">trpF</name>
    <name type="ordered locus">mlr5070</name>
</gene>
<sequence>MALDIKICGLKTDQAMAAALGGGASHVGFIFFAKSPRYVEPAEAGRLREAARGKAVAVAVTVDATDAFLDEIVSAMQPDMLQLHGSEHPERVAELKARYGLPVMKALPLSEAADLDRIRPFIGIADRFLFDAKPPKGSELPGGNGVAFDWRILAGLDAGVDYMLSGGLNAANIGDALRLANPPGIDISSGVESAPGVKDPALIEQFFRAVRAARDDRAA</sequence>
<name>TRPF_RHILO</name>